<keyword id="KW-0963">Cytoplasm</keyword>
<keyword id="KW-0378">Hydrolase</keyword>
<keyword id="KW-0540">Nuclease</keyword>
<keyword id="KW-0690">Ribosome biogenesis</keyword>
<accession>A8GN18</accession>
<protein>
    <recommendedName>
        <fullName evidence="1">Putative pre-16S rRNA nuclease</fullName>
        <ecNumber evidence="1">3.1.-.-</ecNumber>
    </recommendedName>
</protein>
<reference key="1">
    <citation type="submission" date="2007-09" db="EMBL/GenBank/DDBJ databases">
        <title>Complete genome sequence of Rickettsia akari.</title>
        <authorList>
            <person name="Madan A."/>
            <person name="Fahey J."/>
            <person name="Helton E."/>
            <person name="Ketteman M."/>
            <person name="Madan A."/>
            <person name="Rodrigues S."/>
            <person name="Sanchez A."/>
            <person name="Whiting M."/>
            <person name="Dasch G."/>
            <person name="Eremeeva M."/>
        </authorList>
    </citation>
    <scope>NUCLEOTIDE SEQUENCE [LARGE SCALE GENOMIC DNA]</scope>
    <source>
        <strain>Hartford</strain>
    </source>
</reference>
<sequence length="154" mass="17145">MIIKNLQAFSRLLILNSPLIAIDYGSKKLGIALSNQERSIAMPLNTITEINKKIVITSLLSIVEKYKVCGVVIGMPIDMSGAVTEQTNMVMKFAEEFTKSINLPIYLQDERLTTKAANNFLKSFGMKRKDRDNNDDAVAASMILETVLDSMKNI</sequence>
<feature type="chain" id="PRO_1000061561" description="Putative pre-16S rRNA nuclease">
    <location>
        <begin position="1"/>
        <end position="154"/>
    </location>
</feature>
<organism>
    <name type="scientific">Rickettsia akari (strain Hartford)</name>
    <dbReference type="NCBI Taxonomy" id="293614"/>
    <lineage>
        <taxon>Bacteria</taxon>
        <taxon>Pseudomonadati</taxon>
        <taxon>Pseudomonadota</taxon>
        <taxon>Alphaproteobacteria</taxon>
        <taxon>Rickettsiales</taxon>
        <taxon>Rickettsiaceae</taxon>
        <taxon>Rickettsieae</taxon>
        <taxon>Rickettsia</taxon>
        <taxon>spotted fever group</taxon>
    </lineage>
</organism>
<name>YQGF_RICAH</name>
<evidence type="ECO:0000255" key="1">
    <source>
        <dbReference type="HAMAP-Rule" id="MF_00651"/>
    </source>
</evidence>
<comment type="function">
    <text evidence="1">Could be a nuclease involved in processing of the 5'-end of pre-16S rRNA.</text>
</comment>
<comment type="subcellular location">
    <subcellularLocation>
        <location evidence="1">Cytoplasm</location>
    </subcellularLocation>
</comment>
<comment type="similarity">
    <text evidence="1">Belongs to the YqgF nuclease family.</text>
</comment>
<gene>
    <name type="ordered locus">A1C_02470</name>
</gene>
<proteinExistence type="inferred from homology"/>
<dbReference type="EC" id="3.1.-.-" evidence="1"/>
<dbReference type="EMBL" id="CP000847">
    <property type="protein sequence ID" value="ABV74793.1"/>
    <property type="molecule type" value="Genomic_DNA"/>
</dbReference>
<dbReference type="RefSeq" id="WP_012149427.1">
    <property type="nucleotide sequence ID" value="NC_009881.1"/>
</dbReference>
<dbReference type="SMR" id="A8GN18"/>
<dbReference type="STRING" id="293614.A1C_02470"/>
<dbReference type="KEGG" id="rak:A1C_02470"/>
<dbReference type="eggNOG" id="COG0816">
    <property type="taxonomic scope" value="Bacteria"/>
</dbReference>
<dbReference type="HOGENOM" id="CLU_098240_2_2_5"/>
<dbReference type="Proteomes" id="UP000006830">
    <property type="component" value="Chromosome"/>
</dbReference>
<dbReference type="GO" id="GO:0005829">
    <property type="term" value="C:cytosol"/>
    <property type="evidence" value="ECO:0007669"/>
    <property type="project" value="TreeGrafter"/>
</dbReference>
<dbReference type="GO" id="GO:0004518">
    <property type="term" value="F:nuclease activity"/>
    <property type="evidence" value="ECO:0007669"/>
    <property type="project" value="UniProtKB-KW"/>
</dbReference>
<dbReference type="GO" id="GO:0000967">
    <property type="term" value="P:rRNA 5'-end processing"/>
    <property type="evidence" value="ECO:0007669"/>
    <property type="project" value="UniProtKB-UniRule"/>
</dbReference>
<dbReference type="CDD" id="cd16964">
    <property type="entry name" value="YqgF"/>
    <property type="match status" value="1"/>
</dbReference>
<dbReference type="Gene3D" id="3.30.420.140">
    <property type="entry name" value="YqgF/RNase H-like domain"/>
    <property type="match status" value="1"/>
</dbReference>
<dbReference type="HAMAP" id="MF_00651">
    <property type="entry name" value="Nuclease_YqgF"/>
    <property type="match status" value="1"/>
</dbReference>
<dbReference type="InterPro" id="IPR012337">
    <property type="entry name" value="RNaseH-like_sf"/>
</dbReference>
<dbReference type="InterPro" id="IPR005227">
    <property type="entry name" value="YqgF"/>
</dbReference>
<dbReference type="InterPro" id="IPR006641">
    <property type="entry name" value="YqgF/RNaseH-like_dom"/>
</dbReference>
<dbReference type="InterPro" id="IPR037027">
    <property type="entry name" value="YqgF/RNaseH-like_dom_sf"/>
</dbReference>
<dbReference type="NCBIfam" id="TIGR00250">
    <property type="entry name" value="RNAse_H_YqgF"/>
    <property type="match status" value="1"/>
</dbReference>
<dbReference type="PANTHER" id="PTHR33317">
    <property type="entry name" value="POLYNUCLEOTIDYL TRANSFERASE, RIBONUCLEASE H-LIKE SUPERFAMILY PROTEIN"/>
    <property type="match status" value="1"/>
</dbReference>
<dbReference type="PANTHER" id="PTHR33317:SF4">
    <property type="entry name" value="POLYNUCLEOTIDYL TRANSFERASE, RIBONUCLEASE H-LIKE SUPERFAMILY PROTEIN"/>
    <property type="match status" value="1"/>
</dbReference>
<dbReference type="Pfam" id="PF03652">
    <property type="entry name" value="RuvX"/>
    <property type="match status" value="1"/>
</dbReference>
<dbReference type="SMART" id="SM00732">
    <property type="entry name" value="YqgFc"/>
    <property type="match status" value="1"/>
</dbReference>
<dbReference type="SUPFAM" id="SSF53098">
    <property type="entry name" value="Ribonuclease H-like"/>
    <property type="match status" value="1"/>
</dbReference>